<protein>
    <recommendedName>
        <fullName>Uncharacterized protein YgiM</fullName>
    </recommendedName>
</protein>
<comment type="subcellular location">
    <subcellularLocation>
        <location evidence="3">Membrane</location>
        <topology evidence="3">Single-pass membrane protein</topology>
    </subcellularLocation>
</comment>
<comment type="similarity">
    <text evidence="3">To H.influenzae HI_1605.</text>
</comment>
<feature type="signal peptide" evidence="1">
    <location>
        <begin position="1"/>
        <end position="22"/>
    </location>
</feature>
<feature type="chain" id="PRO_0000043105" description="Uncharacterized protein YgiM">
    <location>
        <begin position="23"/>
        <end position="206"/>
    </location>
</feature>
<feature type="transmembrane region" description="Helical" evidence="1">
    <location>
        <begin position="169"/>
        <end position="191"/>
    </location>
</feature>
<feature type="domain" description="SH3b" evidence="2">
    <location>
        <begin position="23"/>
        <end position="89"/>
    </location>
</feature>
<name>YGIM_ECO57</name>
<accession>P0ADU0</accession>
<accession>P39202</accession>
<dbReference type="EMBL" id="AE005174">
    <property type="protein sequence ID" value="AAG58189.1"/>
    <property type="molecule type" value="Genomic_DNA"/>
</dbReference>
<dbReference type="EMBL" id="BA000007">
    <property type="protein sequence ID" value="BAB37361.1"/>
    <property type="molecule type" value="Genomic_DNA"/>
</dbReference>
<dbReference type="PIR" id="B91121">
    <property type="entry name" value="B91121"/>
</dbReference>
<dbReference type="RefSeq" id="NP_311965.1">
    <property type="nucleotide sequence ID" value="NC_002695.1"/>
</dbReference>
<dbReference type="RefSeq" id="WP_001125331.1">
    <property type="nucleotide sequence ID" value="NZ_VOAI01000009.1"/>
</dbReference>
<dbReference type="SMR" id="P0ADU0"/>
<dbReference type="STRING" id="155864.Z4408"/>
<dbReference type="GeneID" id="916236"/>
<dbReference type="KEGG" id="ece:Z4408"/>
<dbReference type="KEGG" id="ecs:ECs_3938"/>
<dbReference type="PATRIC" id="fig|386585.9.peg.4107"/>
<dbReference type="eggNOG" id="COG4991">
    <property type="taxonomic scope" value="Bacteria"/>
</dbReference>
<dbReference type="HOGENOM" id="CLU_094106_0_1_6"/>
<dbReference type="OMA" id="HKGREGW"/>
<dbReference type="Proteomes" id="UP000000558">
    <property type="component" value="Chromosome"/>
</dbReference>
<dbReference type="Proteomes" id="UP000002519">
    <property type="component" value="Chromosome"/>
</dbReference>
<dbReference type="GO" id="GO:0016020">
    <property type="term" value="C:membrane"/>
    <property type="evidence" value="ECO:0007669"/>
    <property type="project" value="UniProtKB-SubCell"/>
</dbReference>
<dbReference type="FunFam" id="2.30.30.40:FF:000104">
    <property type="entry name" value="Bacterial SH3 domain protein"/>
    <property type="match status" value="1"/>
</dbReference>
<dbReference type="Gene3D" id="1.20.1170.10">
    <property type="match status" value="1"/>
</dbReference>
<dbReference type="Gene3D" id="2.30.30.40">
    <property type="entry name" value="SH3 Domains"/>
    <property type="match status" value="1"/>
</dbReference>
<dbReference type="InterPro" id="IPR003646">
    <property type="entry name" value="SH3-like_bac-type"/>
</dbReference>
<dbReference type="InterPro" id="IPR016476">
    <property type="entry name" value="SH3_dom_pro"/>
</dbReference>
<dbReference type="NCBIfam" id="TIGR04211">
    <property type="entry name" value="SH3_and_anchor"/>
    <property type="match status" value="1"/>
</dbReference>
<dbReference type="Pfam" id="PF08239">
    <property type="entry name" value="SH3_3"/>
    <property type="match status" value="1"/>
</dbReference>
<dbReference type="PIRSF" id="PIRSF006158">
    <property type="entry name" value="UCP006158_SH3"/>
    <property type="match status" value="1"/>
</dbReference>
<dbReference type="SMART" id="SM00287">
    <property type="entry name" value="SH3b"/>
    <property type="match status" value="1"/>
</dbReference>
<dbReference type="PROSITE" id="PS51781">
    <property type="entry name" value="SH3B"/>
    <property type="match status" value="1"/>
</dbReference>
<proteinExistence type="inferred from homology"/>
<keyword id="KW-0472">Membrane</keyword>
<keyword id="KW-1185">Reference proteome</keyword>
<keyword id="KW-0732">Signal</keyword>
<keyword id="KW-0812">Transmembrane</keyword>
<keyword id="KW-1133">Transmembrane helix</keyword>
<gene>
    <name type="primary">ygiM</name>
    <name type="ordered locus">Z4408</name>
    <name type="ordered locus">ECs3938</name>
</gene>
<reference key="1">
    <citation type="journal article" date="2001" name="Nature">
        <title>Genome sequence of enterohaemorrhagic Escherichia coli O157:H7.</title>
        <authorList>
            <person name="Perna N.T."/>
            <person name="Plunkett G. III"/>
            <person name="Burland V."/>
            <person name="Mau B."/>
            <person name="Glasner J.D."/>
            <person name="Rose D.J."/>
            <person name="Mayhew G.F."/>
            <person name="Evans P.S."/>
            <person name="Gregor J."/>
            <person name="Kirkpatrick H.A."/>
            <person name="Posfai G."/>
            <person name="Hackett J."/>
            <person name="Klink S."/>
            <person name="Boutin A."/>
            <person name="Shao Y."/>
            <person name="Miller L."/>
            <person name="Grotbeck E.J."/>
            <person name="Davis N.W."/>
            <person name="Lim A."/>
            <person name="Dimalanta E.T."/>
            <person name="Potamousis K."/>
            <person name="Apodaca J."/>
            <person name="Anantharaman T.S."/>
            <person name="Lin J."/>
            <person name="Yen G."/>
            <person name="Schwartz D.C."/>
            <person name="Welch R.A."/>
            <person name="Blattner F.R."/>
        </authorList>
    </citation>
    <scope>NUCLEOTIDE SEQUENCE [LARGE SCALE GENOMIC DNA]</scope>
    <source>
        <strain>O157:H7 / EDL933 / ATCC 700927 / EHEC</strain>
    </source>
</reference>
<reference key="2">
    <citation type="journal article" date="2001" name="DNA Res.">
        <title>Complete genome sequence of enterohemorrhagic Escherichia coli O157:H7 and genomic comparison with a laboratory strain K-12.</title>
        <authorList>
            <person name="Hayashi T."/>
            <person name="Makino K."/>
            <person name="Ohnishi M."/>
            <person name="Kurokawa K."/>
            <person name="Ishii K."/>
            <person name="Yokoyama K."/>
            <person name="Han C.-G."/>
            <person name="Ohtsubo E."/>
            <person name="Nakayama K."/>
            <person name="Murata T."/>
            <person name="Tanaka M."/>
            <person name="Tobe T."/>
            <person name="Iida T."/>
            <person name="Takami H."/>
            <person name="Honda T."/>
            <person name="Sasakawa C."/>
            <person name="Ogasawara N."/>
            <person name="Yasunaga T."/>
            <person name="Kuhara S."/>
            <person name="Shiba T."/>
            <person name="Hattori M."/>
            <person name="Shinagawa H."/>
        </authorList>
    </citation>
    <scope>NUCLEOTIDE SEQUENCE [LARGE SCALE GENOMIC DNA]</scope>
    <source>
        <strain>O157:H7 / Sakai / RIMD 0509952 / EHEC</strain>
    </source>
</reference>
<evidence type="ECO:0000255" key="1"/>
<evidence type="ECO:0000255" key="2">
    <source>
        <dbReference type="PROSITE-ProRule" id="PRU01117"/>
    </source>
</evidence>
<evidence type="ECO:0000305" key="3"/>
<organism>
    <name type="scientific">Escherichia coli O157:H7</name>
    <dbReference type="NCBI Taxonomy" id="83334"/>
    <lineage>
        <taxon>Bacteria</taxon>
        <taxon>Pseudomonadati</taxon>
        <taxon>Pseudomonadota</taxon>
        <taxon>Gammaproteobacteria</taxon>
        <taxon>Enterobacterales</taxon>
        <taxon>Enterobacteriaceae</taxon>
        <taxon>Escherichia</taxon>
    </lineage>
</organism>
<sequence>MPKLRLIGLTLLALSATAVSHAEETRYVSDELNTWVRSGPGDHYRLVGTVNAGEEVTLLQTDANTNYAQVKDSSGRTAWIPLKQLSTEPSLRSRVPDLENQVKTLTDKLTNIDNTWNQRTAEMQQKVAQSDSVINGLKEENQKLKNELIVAQKKVDAASVQLDDKQRTIIMQWFMYGGGVLGLGLLLGLVLPHLIPSRKRKDRWMN</sequence>